<dbReference type="EMBL" id="CP001215">
    <property type="protein sequence ID" value="ACP17013.1"/>
    <property type="molecule type" value="Genomic_DNA"/>
</dbReference>
<dbReference type="RefSeq" id="WP_000487010.1">
    <property type="nucleotide sequence ID" value="NC_012581.1"/>
</dbReference>
<dbReference type="SMR" id="C3L5Q1"/>
<dbReference type="GeneID" id="93006802"/>
<dbReference type="KEGG" id="bah:BAMEG_4560"/>
<dbReference type="HOGENOM" id="CLU_066632_4_0_9"/>
<dbReference type="GO" id="GO:0043590">
    <property type="term" value="C:bacterial nucleoid"/>
    <property type="evidence" value="ECO:0007669"/>
    <property type="project" value="TreeGrafter"/>
</dbReference>
<dbReference type="GO" id="GO:0006310">
    <property type="term" value="P:DNA recombination"/>
    <property type="evidence" value="ECO:0007669"/>
    <property type="project" value="UniProtKB-UniRule"/>
</dbReference>
<dbReference type="GO" id="GO:0006302">
    <property type="term" value="P:double-strand break repair"/>
    <property type="evidence" value="ECO:0007669"/>
    <property type="project" value="TreeGrafter"/>
</dbReference>
<dbReference type="Gene3D" id="2.40.50.140">
    <property type="entry name" value="Nucleic acid-binding proteins"/>
    <property type="match status" value="1"/>
</dbReference>
<dbReference type="Gene3D" id="1.20.1440.120">
    <property type="entry name" value="Recombination protein O, C-terminal domain"/>
    <property type="match status" value="1"/>
</dbReference>
<dbReference type="HAMAP" id="MF_00201">
    <property type="entry name" value="RecO"/>
    <property type="match status" value="1"/>
</dbReference>
<dbReference type="InterPro" id="IPR037278">
    <property type="entry name" value="ARFGAP/RecO"/>
</dbReference>
<dbReference type="InterPro" id="IPR022572">
    <property type="entry name" value="DNA_rep/recomb_RecO_N"/>
</dbReference>
<dbReference type="InterPro" id="IPR012340">
    <property type="entry name" value="NA-bd_OB-fold"/>
</dbReference>
<dbReference type="InterPro" id="IPR003717">
    <property type="entry name" value="RecO"/>
</dbReference>
<dbReference type="InterPro" id="IPR042242">
    <property type="entry name" value="RecO_C"/>
</dbReference>
<dbReference type="NCBIfam" id="TIGR00613">
    <property type="entry name" value="reco"/>
    <property type="match status" value="1"/>
</dbReference>
<dbReference type="PANTHER" id="PTHR33991">
    <property type="entry name" value="DNA REPAIR PROTEIN RECO"/>
    <property type="match status" value="1"/>
</dbReference>
<dbReference type="PANTHER" id="PTHR33991:SF1">
    <property type="entry name" value="DNA REPAIR PROTEIN RECO"/>
    <property type="match status" value="1"/>
</dbReference>
<dbReference type="Pfam" id="PF02565">
    <property type="entry name" value="RecO_C"/>
    <property type="match status" value="1"/>
</dbReference>
<dbReference type="Pfam" id="PF11967">
    <property type="entry name" value="RecO_N"/>
    <property type="match status" value="1"/>
</dbReference>
<dbReference type="SUPFAM" id="SSF57863">
    <property type="entry name" value="ArfGap/RecO-like zinc finger"/>
    <property type="match status" value="1"/>
</dbReference>
<dbReference type="SUPFAM" id="SSF50249">
    <property type="entry name" value="Nucleic acid-binding proteins"/>
    <property type="match status" value="1"/>
</dbReference>
<evidence type="ECO:0000255" key="1">
    <source>
        <dbReference type="HAMAP-Rule" id="MF_00201"/>
    </source>
</evidence>
<sequence>MFQKVEGIVIRTTDYGETNKIVTIFSRELGKVSAMARGAKKPKSRLASVSQLMTHGHFLIQMGSGLGTLQQGEIISTMKEIREDIFLTAYASFIVELTDKATEDKKHNPYLFEMLYQTLHYMCEGVDPEVLSLIYQTKMLPVLGMRPYFDTCAICHQETDFVAFSVREGGFLCSRHAEQDQYRIPVGEAVHKLLRLFYHFDLHRLGNVSVKDSTKKQMRLVLNTYYDEYCGIYLKSRRFLEQLDKFQI</sequence>
<protein>
    <recommendedName>
        <fullName evidence="1">DNA repair protein RecO</fullName>
    </recommendedName>
    <alternativeName>
        <fullName evidence="1">Recombination protein O</fullName>
    </alternativeName>
</protein>
<feature type="chain" id="PRO_1000193356" description="DNA repair protein RecO">
    <location>
        <begin position="1"/>
        <end position="248"/>
    </location>
</feature>
<keyword id="KW-0227">DNA damage</keyword>
<keyword id="KW-0233">DNA recombination</keyword>
<keyword id="KW-0234">DNA repair</keyword>
<name>RECO_BACAC</name>
<organism>
    <name type="scientific">Bacillus anthracis (strain CDC 684 / NRRL 3495)</name>
    <dbReference type="NCBI Taxonomy" id="568206"/>
    <lineage>
        <taxon>Bacteria</taxon>
        <taxon>Bacillati</taxon>
        <taxon>Bacillota</taxon>
        <taxon>Bacilli</taxon>
        <taxon>Bacillales</taxon>
        <taxon>Bacillaceae</taxon>
        <taxon>Bacillus</taxon>
        <taxon>Bacillus cereus group</taxon>
    </lineage>
</organism>
<accession>C3L5Q1</accession>
<reference key="1">
    <citation type="submission" date="2008-10" db="EMBL/GenBank/DDBJ databases">
        <title>Genome sequence of Bacillus anthracis str. CDC 684.</title>
        <authorList>
            <person name="Dodson R.J."/>
            <person name="Munk A.C."/>
            <person name="Brettin T."/>
            <person name="Bruce D."/>
            <person name="Detter C."/>
            <person name="Tapia R."/>
            <person name="Han C."/>
            <person name="Sutton G."/>
            <person name="Sims D."/>
        </authorList>
    </citation>
    <scope>NUCLEOTIDE SEQUENCE [LARGE SCALE GENOMIC DNA]</scope>
    <source>
        <strain>CDC 684 / NRRL 3495</strain>
    </source>
</reference>
<proteinExistence type="inferred from homology"/>
<gene>
    <name evidence="1" type="primary">recO</name>
    <name type="ordered locus">BAMEG_4560</name>
</gene>
<comment type="function">
    <text evidence="1">Involved in DNA repair and RecF pathway recombination.</text>
</comment>
<comment type="similarity">
    <text evidence="1">Belongs to the RecO family.</text>
</comment>